<protein>
    <recommendedName>
        <fullName evidence="2">Histone H2B type F-M</fullName>
    </recommendedName>
    <alternativeName>
        <fullName>Histone H2B.s</fullName>
        <shortName>H2B/s</shortName>
    </alternativeName>
</protein>
<proteinExistence type="evidence at protein level"/>
<name>H2BFM_HUMAN</name>
<feature type="chain" id="PRO_0000244827" description="Histone H2B type F-M">
    <location>
        <begin position="1"/>
        <end position="154"/>
    </location>
</feature>
<feature type="region of interest" description="Disordered" evidence="1">
    <location>
        <begin position="1"/>
        <end position="61"/>
    </location>
</feature>
<feature type="compositionally biased region" description="Low complexity" evidence="1">
    <location>
        <begin position="1"/>
        <end position="18"/>
    </location>
</feature>
<feature type="compositionally biased region" description="Basic residues" evidence="1">
    <location>
        <begin position="34"/>
        <end position="50"/>
    </location>
</feature>
<feature type="splice variant" id="VSP_062142" description="In isoform 2.">
    <location>
        <begin position="1"/>
        <end position="6"/>
    </location>
</feature>
<keyword id="KW-0024">Alternative initiation</keyword>
<keyword id="KW-0158">Chromosome</keyword>
<keyword id="KW-0238">DNA-binding</keyword>
<keyword id="KW-0544">Nucleosome core</keyword>
<keyword id="KW-0539">Nucleus</keyword>
<keyword id="KW-1267">Proteomics identification</keyword>
<keyword id="KW-1185">Reference proteome</keyword>
<gene>
    <name evidence="3" type="primary">H2BW2</name>
    <name evidence="3" type="synonym">H2BFM</name>
</gene>
<evidence type="ECO:0000256" key="1">
    <source>
        <dbReference type="SAM" id="MobiDB-lite"/>
    </source>
</evidence>
<evidence type="ECO:0000305" key="2"/>
<evidence type="ECO:0000312" key="3">
    <source>
        <dbReference type="HGNC" id="HGNC:27867"/>
    </source>
</evidence>
<organism>
    <name type="scientific">Homo sapiens</name>
    <name type="common">Human</name>
    <dbReference type="NCBI Taxonomy" id="9606"/>
    <lineage>
        <taxon>Eukaryota</taxon>
        <taxon>Metazoa</taxon>
        <taxon>Chordata</taxon>
        <taxon>Craniata</taxon>
        <taxon>Vertebrata</taxon>
        <taxon>Euteleostomi</taxon>
        <taxon>Mammalia</taxon>
        <taxon>Eutheria</taxon>
        <taxon>Euarchontoglires</taxon>
        <taxon>Primates</taxon>
        <taxon>Haplorrhini</taxon>
        <taxon>Catarrhini</taxon>
        <taxon>Hominidae</taxon>
        <taxon>Homo</taxon>
    </lineage>
</organism>
<comment type="function">
    <text>Core component of nucleosome. Nucleosomes wrap and compact DNA into chromatin, limiting DNA accessibility to the cellular machineries which require DNA as a template. Histones thereby play a central role in transcription regulation, DNA repair, DNA replication and chromosomal stability. DNA accessibility is regulated via a complex set of post-translational modifications of histones, also called histone code, and nucleosome remodeling.</text>
</comment>
<comment type="subunit">
    <text>The nucleosome is a histone octamer containing two molecules each of H2A, H2B, H3 and H4 assembled in one H3-H4 heterotetramer and two H2A-H2B heterodimers. The octamer wraps approximately 147 bp of DNA.</text>
</comment>
<comment type="subcellular location">
    <subcellularLocation>
        <location>Nucleus</location>
    </subcellularLocation>
    <subcellularLocation>
        <location>Chromosome</location>
    </subcellularLocation>
</comment>
<comment type="alternative products">
    <event type="alternative initiation"/>
    <isoform>
        <id>P0C1H6-1</id>
        <name>1</name>
        <sequence type="displayed"/>
    </isoform>
    <isoform>
        <id>P0C1H6-2</id>
        <name>2</name>
        <sequence type="described" ref="VSP_062142"/>
    </isoform>
</comment>
<comment type="miscellaneous">
    <molecule>Isoform 2</molecule>
    <text>Gene prediction based on conservation.</text>
</comment>
<comment type="miscellaneous">
    <text>In contrast to other H2B histones, it does not contain the conserved residue in C-terminus that is the target of monoubiquitination.</text>
</comment>
<comment type="similarity">
    <text evidence="2">Belongs to the histone H2B family.</text>
</comment>
<dbReference type="EMBL" id="AK093522">
    <property type="status" value="NOT_ANNOTATED_CDS"/>
    <property type="molecule type" value="mRNA"/>
</dbReference>
<dbReference type="EMBL" id="Z73497">
    <property type="status" value="NOT_ANNOTATED_CDS"/>
    <property type="molecule type" value="Genomic_DNA"/>
</dbReference>
<dbReference type="CCDS" id="CCDS55468.2">
    <molecule id="P0C1H6-2"/>
</dbReference>
<dbReference type="RefSeq" id="NP_001157888.2">
    <molecule id="P0C1H6-2"/>
    <property type="nucleotide sequence ID" value="NM_001164416.4"/>
</dbReference>
<dbReference type="RefSeq" id="NP_001375393.1">
    <molecule id="P0C1H6-2"/>
    <property type="nucleotide sequence ID" value="NM_001388464.1"/>
</dbReference>
<dbReference type="RefSeq" id="XP_006724703.1">
    <property type="nucleotide sequence ID" value="XM_006724640.2"/>
</dbReference>
<dbReference type="RefSeq" id="XP_011529224.1">
    <molecule id="P0C1H6-1"/>
    <property type="nucleotide sequence ID" value="XM_011530922.3"/>
</dbReference>
<dbReference type="RefSeq" id="XP_054182874.1">
    <molecule id="P0C1H6-1"/>
    <property type="nucleotide sequence ID" value="XM_054326899.1"/>
</dbReference>
<dbReference type="SMR" id="P0C1H6"/>
<dbReference type="BioGRID" id="130376">
    <property type="interactions" value="1"/>
</dbReference>
<dbReference type="FunCoup" id="P0C1H6">
    <property type="interactions" value="5"/>
</dbReference>
<dbReference type="STRING" id="9606.ENSP00000347119"/>
<dbReference type="GlyGen" id="P0C1H6">
    <property type="glycosylation" value="1 site, 1 O-linked glycan (1 site)"/>
</dbReference>
<dbReference type="PhosphoSitePlus" id="P0C1H6"/>
<dbReference type="BioMuta" id="H2BFM"/>
<dbReference type="DMDM" id="110279004"/>
<dbReference type="MassIVE" id="P0C1H6"/>
<dbReference type="PaxDb" id="9606-ENSP00000347119"/>
<dbReference type="PeptideAtlas" id="P0C1H6"/>
<dbReference type="ProteomicsDB" id="52297"/>
<dbReference type="Antibodypedia" id="49536">
    <property type="antibodies" value="62 antibodies from 10 providers"/>
</dbReference>
<dbReference type="DNASU" id="286436"/>
<dbReference type="Ensembl" id="ENST00000355016.8">
    <molecule id="P0C1H6-2"/>
    <property type="protein sequence ID" value="ENSP00000347119.4"/>
    <property type="gene ID" value="ENSG00000101812.15"/>
</dbReference>
<dbReference type="Ensembl" id="ENST00000675318.3">
    <molecule id="P0C1H6-2"/>
    <property type="protein sequence ID" value="ENSP00000502072.2"/>
    <property type="gene ID" value="ENSG00000101812.15"/>
</dbReference>
<dbReference type="GeneID" id="286436"/>
<dbReference type="KEGG" id="hsa:286436"/>
<dbReference type="MANE-Select" id="ENST00000675318.3">
    <molecule id="P0C1H6-2"/>
    <property type="protein sequence ID" value="ENSP00000502072.2"/>
    <property type="RefSeq nucleotide sequence ID" value="NM_001388464.1"/>
    <property type="RefSeq protein sequence ID" value="NP_001375393.1"/>
</dbReference>
<dbReference type="AGR" id="HGNC:27867"/>
<dbReference type="CTD" id="286436"/>
<dbReference type="DisGeNET" id="286436"/>
<dbReference type="GeneCards" id="H2BW2"/>
<dbReference type="HGNC" id="HGNC:27867">
    <property type="gene designation" value="H2BW2"/>
</dbReference>
<dbReference type="HPA" id="ENSG00000101812">
    <property type="expression patterns" value="Tissue enhanced (testis)"/>
</dbReference>
<dbReference type="neXtProt" id="NX_P0C1H6"/>
<dbReference type="OpenTargets" id="ENSG00000101812"/>
<dbReference type="VEuPathDB" id="HostDB:ENSG00000101812"/>
<dbReference type="eggNOG" id="KOG1744">
    <property type="taxonomic scope" value="Eukaryota"/>
</dbReference>
<dbReference type="GeneTree" id="ENSGT01110000267181"/>
<dbReference type="HOGENOM" id="CLU_075666_3_0_1"/>
<dbReference type="InParanoid" id="P0C1H6"/>
<dbReference type="OMA" id="QEPKNAN"/>
<dbReference type="OrthoDB" id="9539303at2759"/>
<dbReference type="PAN-GO" id="P0C1H6">
    <property type="GO annotations" value="2 GO annotations based on evolutionary models"/>
</dbReference>
<dbReference type="PathwayCommons" id="P0C1H6"/>
<dbReference type="SIGNOR" id="P0C1H6"/>
<dbReference type="BioGRID-ORCS" id="286436">
    <property type="hits" value="6 hits in 761 CRISPR screens"/>
</dbReference>
<dbReference type="GeneWiki" id="H2BFM"/>
<dbReference type="GenomeRNAi" id="286436"/>
<dbReference type="Pharos" id="P0C1H6">
    <property type="development level" value="Tdark"/>
</dbReference>
<dbReference type="PRO" id="PR:P0C1H6"/>
<dbReference type="Proteomes" id="UP000005640">
    <property type="component" value="Chromosome X"/>
</dbReference>
<dbReference type="RNAct" id="P0C1H6">
    <property type="molecule type" value="protein"/>
</dbReference>
<dbReference type="Bgee" id="ENSG00000101812">
    <property type="expression patterns" value="Expressed in male germ line stem cell (sensu Vertebrata) in testis and 91 other cell types or tissues"/>
</dbReference>
<dbReference type="ExpressionAtlas" id="P0C1H6">
    <property type="expression patterns" value="baseline and differential"/>
</dbReference>
<dbReference type="GO" id="GO:0000786">
    <property type="term" value="C:nucleosome"/>
    <property type="evidence" value="ECO:0007669"/>
    <property type="project" value="UniProtKB-KW"/>
</dbReference>
<dbReference type="GO" id="GO:0005634">
    <property type="term" value="C:nucleus"/>
    <property type="evidence" value="ECO:0007669"/>
    <property type="project" value="UniProtKB-SubCell"/>
</dbReference>
<dbReference type="GO" id="GO:0003677">
    <property type="term" value="F:DNA binding"/>
    <property type="evidence" value="ECO:0007669"/>
    <property type="project" value="UniProtKB-KW"/>
</dbReference>
<dbReference type="GO" id="GO:0046982">
    <property type="term" value="F:protein heterodimerization activity"/>
    <property type="evidence" value="ECO:0007669"/>
    <property type="project" value="InterPro"/>
</dbReference>
<dbReference type="GO" id="GO:0030527">
    <property type="term" value="F:structural constituent of chromatin"/>
    <property type="evidence" value="ECO:0007669"/>
    <property type="project" value="InterPro"/>
</dbReference>
<dbReference type="CDD" id="cd22910">
    <property type="entry name" value="HFD_H2B"/>
    <property type="match status" value="1"/>
</dbReference>
<dbReference type="FunFam" id="1.10.20.10:FF:000066">
    <property type="entry name" value="H2B histone family member W testis-specific"/>
    <property type="match status" value="1"/>
</dbReference>
<dbReference type="Gene3D" id="1.10.20.10">
    <property type="entry name" value="Histone, subunit A"/>
    <property type="match status" value="1"/>
</dbReference>
<dbReference type="InterPro" id="IPR009072">
    <property type="entry name" value="Histone-fold"/>
</dbReference>
<dbReference type="InterPro" id="IPR007125">
    <property type="entry name" value="Histone_H2A/H2B/H3"/>
</dbReference>
<dbReference type="InterPro" id="IPR000558">
    <property type="entry name" value="Histone_H2B"/>
</dbReference>
<dbReference type="PANTHER" id="PTHR23428">
    <property type="entry name" value="HISTONE H2B"/>
    <property type="match status" value="1"/>
</dbReference>
<dbReference type="Pfam" id="PF00125">
    <property type="entry name" value="Histone"/>
    <property type="match status" value="1"/>
</dbReference>
<dbReference type="PRINTS" id="PR00621">
    <property type="entry name" value="HISTONEH2B"/>
</dbReference>
<dbReference type="SMART" id="SM00427">
    <property type="entry name" value="H2B"/>
    <property type="match status" value="1"/>
</dbReference>
<dbReference type="SUPFAM" id="SSF47113">
    <property type="entry name" value="Histone-fold"/>
    <property type="match status" value="1"/>
</dbReference>
<accession>P0C1H6</accession>
<accession>A6NP82</accession>
<sequence>MAAASAMAEASSETTSEEGQSIQEPKEANSTKAQKQKRRGCRGSRRRHANRRGDSFGDSFTPYFPRVLKQVHQGLSLSQEAVSVMDSMIHDILDRIATEAGQLAHYTKRVTITSRDIQMAVRLLLPGKMGKLAEAQGTNAALRTSLCAIWQQRK</sequence>
<reference key="1">
    <citation type="journal article" date="2004" name="Nat. Genet.">
        <title>Complete sequencing and characterization of 21,243 full-length human cDNAs.</title>
        <authorList>
            <person name="Ota T."/>
            <person name="Suzuki Y."/>
            <person name="Nishikawa T."/>
            <person name="Otsuki T."/>
            <person name="Sugiyama T."/>
            <person name="Irie R."/>
            <person name="Wakamatsu A."/>
            <person name="Hayashi K."/>
            <person name="Sato H."/>
            <person name="Nagai K."/>
            <person name="Kimura K."/>
            <person name="Makita H."/>
            <person name="Sekine M."/>
            <person name="Obayashi M."/>
            <person name="Nishi T."/>
            <person name="Shibahara T."/>
            <person name="Tanaka T."/>
            <person name="Ishii S."/>
            <person name="Yamamoto J."/>
            <person name="Saito K."/>
            <person name="Kawai Y."/>
            <person name="Isono Y."/>
            <person name="Nakamura Y."/>
            <person name="Nagahari K."/>
            <person name="Murakami K."/>
            <person name="Yasuda T."/>
            <person name="Iwayanagi T."/>
            <person name="Wagatsuma M."/>
            <person name="Shiratori A."/>
            <person name="Sudo H."/>
            <person name="Hosoiri T."/>
            <person name="Kaku Y."/>
            <person name="Kodaira H."/>
            <person name="Kondo H."/>
            <person name="Sugawara M."/>
            <person name="Takahashi M."/>
            <person name="Kanda K."/>
            <person name="Yokoi T."/>
            <person name="Furuya T."/>
            <person name="Kikkawa E."/>
            <person name="Omura Y."/>
            <person name="Abe K."/>
            <person name="Kamihara K."/>
            <person name="Katsuta N."/>
            <person name="Sato K."/>
            <person name="Tanikawa M."/>
            <person name="Yamazaki M."/>
            <person name="Ninomiya K."/>
            <person name="Ishibashi T."/>
            <person name="Yamashita H."/>
            <person name="Murakawa K."/>
            <person name="Fujimori K."/>
            <person name="Tanai H."/>
            <person name="Kimata M."/>
            <person name="Watanabe M."/>
            <person name="Hiraoka S."/>
            <person name="Chiba Y."/>
            <person name="Ishida S."/>
            <person name="Ono Y."/>
            <person name="Takiguchi S."/>
            <person name="Watanabe S."/>
            <person name="Yosida M."/>
            <person name="Hotuta T."/>
            <person name="Kusano J."/>
            <person name="Kanehori K."/>
            <person name="Takahashi-Fujii A."/>
            <person name="Hara H."/>
            <person name="Tanase T.-O."/>
            <person name="Nomura Y."/>
            <person name="Togiya S."/>
            <person name="Komai F."/>
            <person name="Hara R."/>
            <person name="Takeuchi K."/>
            <person name="Arita M."/>
            <person name="Imose N."/>
            <person name="Musashino K."/>
            <person name="Yuuki H."/>
            <person name="Oshima A."/>
            <person name="Sasaki N."/>
            <person name="Aotsuka S."/>
            <person name="Yoshikawa Y."/>
            <person name="Matsunawa H."/>
            <person name="Ichihara T."/>
            <person name="Shiohata N."/>
            <person name="Sano S."/>
            <person name="Moriya S."/>
            <person name="Momiyama H."/>
            <person name="Satoh N."/>
            <person name="Takami S."/>
            <person name="Terashima Y."/>
            <person name="Suzuki O."/>
            <person name="Nakagawa S."/>
            <person name="Senoh A."/>
            <person name="Mizoguchi H."/>
            <person name="Goto Y."/>
            <person name="Shimizu F."/>
            <person name="Wakebe H."/>
            <person name="Hishigaki H."/>
            <person name="Watanabe T."/>
            <person name="Sugiyama A."/>
            <person name="Takemoto M."/>
            <person name="Kawakami B."/>
            <person name="Yamazaki M."/>
            <person name="Watanabe K."/>
            <person name="Kumagai A."/>
            <person name="Itakura S."/>
            <person name="Fukuzumi Y."/>
            <person name="Fujimori Y."/>
            <person name="Komiyama M."/>
            <person name="Tashiro H."/>
            <person name="Tanigami A."/>
            <person name="Fujiwara T."/>
            <person name="Ono T."/>
            <person name="Yamada K."/>
            <person name="Fujii Y."/>
            <person name="Ozaki K."/>
            <person name="Hirao M."/>
            <person name="Ohmori Y."/>
            <person name="Kawabata A."/>
            <person name="Hikiji T."/>
            <person name="Kobatake N."/>
            <person name="Inagaki H."/>
            <person name="Ikema Y."/>
            <person name="Okamoto S."/>
            <person name="Okitani R."/>
            <person name="Kawakami T."/>
            <person name="Noguchi S."/>
            <person name="Itoh T."/>
            <person name="Shigeta K."/>
            <person name="Senba T."/>
            <person name="Matsumura K."/>
            <person name="Nakajima Y."/>
            <person name="Mizuno T."/>
            <person name="Morinaga M."/>
            <person name="Sasaki M."/>
            <person name="Togashi T."/>
            <person name="Oyama M."/>
            <person name="Hata H."/>
            <person name="Watanabe M."/>
            <person name="Komatsu T."/>
            <person name="Mizushima-Sugano J."/>
            <person name="Satoh T."/>
            <person name="Shirai Y."/>
            <person name="Takahashi Y."/>
            <person name="Nakagawa K."/>
            <person name="Okumura K."/>
            <person name="Nagase T."/>
            <person name="Nomura N."/>
            <person name="Kikuchi H."/>
            <person name="Masuho Y."/>
            <person name="Yamashita R."/>
            <person name="Nakai K."/>
            <person name="Yada T."/>
            <person name="Nakamura Y."/>
            <person name="Ohara O."/>
            <person name="Isogai T."/>
            <person name="Sugano S."/>
        </authorList>
    </citation>
    <scope>NUCLEOTIDE SEQUENCE [LARGE SCALE MRNA]</scope>
</reference>
<reference key="2">
    <citation type="journal article" date="2005" name="Nature">
        <title>The DNA sequence of the human X chromosome.</title>
        <authorList>
            <person name="Ross M.T."/>
            <person name="Grafham D.V."/>
            <person name="Coffey A.J."/>
            <person name="Scherer S."/>
            <person name="McLay K."/>
            <person name="Muzny D."/>
            <person name="Platzer M."/>
            <person name="Howell G.R."/>
            <person name="Burrows C."/>
            <person name="Bird C.P."/>
            <person name="Frankish A."/>
            <person name="Lovell F.L."/>
            <person name="Howe K.L."/>
            <person name="Ashurst J.L."/>
            <person name="Fulton R.S."/>
            <person name="Sudbrak R."/>
            <person name="Wen G."/>
            <person name="Jones M.C."/>
            <person name="Hurles M.E."/>
            <person name="Andrews T.D."/>
            <person name="Scott C.E."/>
            <person name="Searle S."/>
            <person name="Ramser J."/>
            <person name="Whittaker A."/>
            <person name="Deadman R."/>
            <person name="Carter N.P."/>
            <person name="Hunt S.E."/>
            <person name="Chen R."/>
            <person name="Cree A."/>
            <person name="Gunaratne P."/>
            <person name="Havlak P."/>
            <person name="Hodgson A."/>
            <person name="Metzker M.L."/>
            <person name="Richards S."/>
            <person name="Scott G."/>
            <person name="Steffen D."/>
            <person name="Sodergren E."/>
            <person name="Wheeler D.A."/>
            <person name="Worley K.C."/>
            <person name="Ainscough R."/>
            <person name="Ambrose K.D."/>
            <person name="Ansari-Lari M.A."/>
            <person name="Aradhya S."/>
            <person name="Ashwell R.I."/>
            <person name="Babbage A.K."/>
            <person name="Bagguley C.L."/>
            <person name="Ballabio A."/>
            <person name="Banerjee R."/>
            <person name="Barker G.E."/>
            <person name="Barlow K.F."/>
            <person name="Barrett I.P."/>
            <person name="Bates K.N."/>
            <person name="Beare D.M."/>
            <person name="Beasley H."/>
            <person name="Beasley O."/>
            <person name="Beck A."/>
            <person name="Bethel G."/>
            <person name="Blechschmidt K."/>
            <person name="Brady N."/>
            <person name="Bray-Allen S."/>
            <person name="Bridgeman A.M."/>
            <person name="Brown A.J."/>
            <person name="Brown M.J."/>
            <person name="Bonnin D."/>
            <person name="Bruford E.A."/>
            <person name="Buhay C."/>
            <person name="Burch P."/>
            <person name="Burford D."/>
            <person name="Burgess J."/>
            <person name="Burrill W."/>
            <person name="Burton J."/>
            <person name="Bye J.M."/>
            <person name="Carder C."/>
            <person name="Carrel L."/>
            <person name="Chako J."/>
            <person name="Chapman J.C."/>
            <person name="Chavez D."/>
            <person name="Chen E."/>
            <person name="Chen G."/>
            <person name="Chen Y."/>
            <person name="Chen Z."/>
            <person name="Chinault C."/>
            <person name="Ciccodicola A."/>
            <person name="Clark S.Y."/>
            <person name="Clarke G."/>
            <person name="Clee C.M."/>
            <person name="Clegg S."/>
            <person name="Clerc-Blankenburg K."/>
            <person name="Clifford K."/>
            <person name="Cobley V."/>
            <person name="Cole C.G."/>
            <person name="Conquer J.S."/>
            <person name="Corby N."/>
            <person name="Connor R.E."/>
            <person name="David R."/>
            <person name="Davies J."/>
            <person name="Davis C."/>
            <person name="Davis J."/>
            <person name="Delgado O."/>
            <person name="Deshazo D."/>
            <person name="Dhami P."/>
            <person name="Ding Y."/>
            <person name="Dinh H."/>
            <person name="Dodsworth S."/>
            <person name="Draper H."/>
            <person name="Dugan-Rocha S."/>
            <person name="Dunham A."/>
            <person name="Dunn M."/>
            <person name="Durbin K.J."/>
            <person name="Dutta I."/>
            <person name="Eades T."/>
            <person name="Ellwood M."/>
            <person name="Emery-Cohen A."/>
            <person name="Errington H."/>
            <person name="Evans K.L."/>
            <person name="Faulkner L."/>
            <person name="Francis F."/>
            <person name="Frankland J."/>
            <person name="Fraser A.E."/>
            <person name="Galgoczy P."/>
            <person name="Gilbert J."/>
            <person name="Gill R."/>
            <person name="Gloeckner G."/>
            <person name="Gregory S.G."/>
            <person name="Gribble S."/>
            <person name="Griffiths C."/>
            <person name="Grocock R."/>
            <person name="Gu Y."/>
            <person name="Gwilliam R."/>
            <person name="Hamilton C."/>
            <person name="Hart E.A."/>
            <person name="Hawes A."/>
            <person name="Heath P.D."/>
            <person name="Heitmann K."/>
            <person name="Hennig S."/>
            <person name="Hernandez J."/>
            <person name="Hinzmann B."/>
            <person name="Ho S."/>
            <person name="Hoffs M."/>
            <person name="Howden P.J."/>
            <person name="Huckle E.J."/>
            <person name="Hume J."/>
            <person name="Hunt P.J."/>
            <person name="Hunt A.R."/>
            <person name="Isherwood J."/>
            <person name="Jacob L."/>
            <person name="Johnson D."/>
            <person name="Jones S."/>
            <person name="de Jong P.J."/>
            <person name="Joseph S.S."/>
            <person name="Keenan S."/>
            <person name="Kelly S."/>
            <person name="Kershaw J.K."/>
            <person name="Khan Z."/>
            <person name="Kioschis P."/>
            <person name="Klages S."/>
            <person name="Knights A.J."/>
            <person name="Kosiura A."/>
            <person name="Kovar-Smith C."/>
            <person name="Laird G.K."/>
            <person name="Langford C."/>
            <person name="Lawlor S."/>
            <person name="Leversha M."/>
            <person name="Lewis L."/>
            <person name="Liu W."/>
            <person name="Lloyd C."/>
            <person name="Lloyd D.M."/>
            <person name="Loulseged H."/>
            <person name="Loveland J.E."/>
            <person name="Lovell J.D."/>
            <person name="Lozado R."/>
            <person name="Lu J."/>
            <person name="Lyne R."/>
            <person name="Ma J."/>
            <person name="Maheshwari M."/>
            <person name="Matthews L.H."/>
            <person name="McDowall J."/>
            <person name="McLaren S."/>
            <person name="McMurray A."/>
            <person name="Meidl P."/>
            <person name="Meitinger T."/>
            <person name="Milne S."/>
            <person name="Miner G."/>
            <person name="Mistry S.L."/>
            <person name="Morgan M."/>
            <person name="Morris S."/>
            <person name="Mueller I."/>
            <person name="Mullikin J.C."/>
            <person name="Nguyen N."/>
            <person name="Nordsiek G."/>
            <person name="Nyakatura G."/>
            <person name="O'dell C.N."/>
            <person name="Okwuonu G."/>
            <person name="Palmer S."/>
            <person name="Pandian R."/>
            <person name="Parker D."/>
            <person name="Parrish J."/>
            <person name="Pasternak S."/>
            <person name="Patel D."/>
            <person name="Pearce A.V."/>
            <person name="Pearson D.M."/>
            <person name="Pelan S.E."/>
            <person name="Perez L."/>
            <person name="Porter K.M."/>
            <person name="Ramsey Y."/>
            <person name="Reichwald K."/>
            <person name="Rhodes S."/>
            <person name="Ridler K.A."/>
            <person name="Schlessinger D."/>
            <person name="Schueler M.G."/>
            <person name="Sehra H.K."/>
            <person name="Shaw-Smith C."/>
            <person name="Shen H."/>
            <person name="Sheridan E.M."/>
            <person name="Shownkeen R."/>
            <person name="Skuce C.D."/>
            <person name="Smith M.L."/>
            <person name="Sotheran E.C."/>
            <person name="Steingruber H.E."/>
            <person name="Steward C.A."/>
            <person name="Storey R."/>
            <person name="Swann R.M."/>
            <person name="Swarbreck D."/>
            <person name="Tabor P.E."/>
            <person name="Taudien S."/>
            <person name="Taylor T."/>
            <person name="Teague B."/>
            <person name="Thomas K."/>
            <person name="Thorpe A."/>
            <person name="Timms K."/>
            <person name="Tracey A."/>
            <person name="Trevanion S."/>
            <person name="Tromans A.C."/>
            <person name="d'Urso M."/>
            <person name="Verduzco D."/>
            <person name="Villasana D."/>
            <person name="Waldron L."/>
            <person name="Wall M."/>
            <person name="Wang Q."/>
            <person name="Warren J."/>
            <person name="Warry G.L."/>
            <person name="Wei X."/>
            <person name="West A."/>
            <person name="Whitehead S.L."/>
            <person name="Whiteley M.N."/>
            <person name="Wilkinson J.E."/>
            <person name="Willey D.L."/>
            <person name="Williams G."/>
            <person name="Williams L."/>
            <person name="Williamson A."/>
            <person name="Williamson H."/>
            <person name="Wilming L."/>
            <person name="Woodmansey R.L."/>
            <person name="Wray P.W."/>
            <person name="Yen J."/>
            <person name="Zhang J."/>
            <person name="Zhou J."/>
            <person name="Zoghbi H."/>
            <person name="Zorilla S."/>
            <person name="Buck D."/>
            <person name="Reinhardt R."/>
            <person name="Poustka A."/>
            <person name="Rosenthal A."/>
            <person name="Lehrach H."/>
            <person name="Meindl A."/>
            <person name="Minx P.J."/>
            <person name="Hillier L.W."/>
            <person name="Willard H.F."/>
            <person name="Wilson R.K."/>
            <person name="Waterston R.H."/>
            <person name="Rice C.M."/>
            <person name="Vaudin M."/>
            <person name="Coulson A."/>
            <person name="Nelson D.L."/>
            <person name="Weinstock G."/>
            <person name="Sulston J.E."/>
            <person name="Durbin R.M."/>
            <person name="Hubbard T."/>
            <person name="Gibbs R.A."/>
            <person name="Beck S."/>
            <person name="Rogers J."/>
            <person name="Bentley D.R."/>
        </authorList>
    </citation>
    <scope>NUCLEOTIDE SEQUENCE [LARGE SCALE GENOMIC DNA]</scope>
</reference>
<reference key="3">
    <citation type="journal article" date="2008" name="Proc. Natl. Acad. Sci. U.S.A.">
        <title>A quantitative atlas of mitotic phosphorylation.</title>
        <authorList>
            <person name="Dephoure N."/>
            <person name="Zhou C."/>
            <person name="Villen J."/>
            <person name="Beausoleil S.A."/>
            <person name="Bakalarski C.E."/>
            <person name="Elledge S.J."/>
            <person name="Gygi S.P."/>
        </authorList>
    </citation>
    <scope>IDENTIFICATION BY MASS SPECTROMETRY [LARGE SCALE ANALYSIS]</scope>
    <source>
        <tissue>Cervix carcinoma</tissue>
    </source>
</reference>